<protein>
    <recommendedName>
        <fullName evidence="1">GTPase Era</fullName>
    </recommendedName>
</protein>
<reference key="1">
    <citation type="journal article" date="2010" name="J. Bacteriol.">
        <title>The genetic basis of laboratory adaptation in Caulobacter crescentus.</title>
        <authorList>
            <person name="Marks M.E."/>
            <person name="Castro-Rojas C.M."/>
            <person name="Teiling C."/>
            <person name="Du L."/>
            <person name="Kapatral V."/>
            <person name="Walunas T.L."/>
            <person name="Crosson S."/>
        </authorList>
    </citation>
    <scope>NUCLEOTIDE SEQUENCE [LARGE SCALE GENOMIC DNA]</scope>
    <source>
        <strain>NA1000 / CB15N</strain>
    </source>
</reference>
<proteinExistence type="inferred from homology"/>
<keyword id="KW-0997">Cell inner membrane</keyword>
<keyword id="KW-1003">Cell membrane</keyword>
<keyword id="KW-0963">Cytoplasm</keyword>
<keyword id="KW-0342">GTP-binding</keyword>
<keyword id="KW-0472">Membrane</keyword>
<keyword id="KW-0547">Nucleotide-binding</keyword>
<keyword id="KW-1185">Reference proteome</keyword>
<keyword id="KW-0690">Ribosome biogenesis</keyword>
<keyword id="KW-0694">RNA-binding</keyword>
<keyword id="KW-0699">rRNA-binding</keyword>
<comment type="function">
    <text evidence="1">An essential GTPase that binds both GDP and GTP, with rapid nucleotide exchange. Plays a role in 16S rRNA processing and 30S ribosomal subunit biogenesis and possibly also in cell cycle regulation and energy metabolism.</text>
</comment>
<comment type="subunit">
    <text evidence="1">Monomer.</text>
</comment>
<comment type="subcellular location">
    <subcellularLocation>
        <location>Cytoplasm</location>
    </subcellularLocation>
    <subcellularLocation>
        <location evidence="1">Cell inner membrane</location>
        <topology evidence="1">Peripheral membrane protein</topology>
    </subcellularLocation>
</comment>
<comment type="similarity">
    <text evidence="1 2">Belongs to the TRAFAC class TrmE-Era-EngA-EngB-Septin-like GTPase superfamily. Era GTPase family.</text>
</comment>
<sequence length="316" mass="34710">MTDTTSKTRAGFAAIIGAPNAGKSTLVNRMVGAKVSIVTQKVQTTRFPVRGVAIEGDTQIVLVDTPGIFSPRRRLDRAMVRAAWAGSEEAEATVHLVDVQAELASRADKATPGEYRSAQDVQTIIEGLKAADRKVILALNKIDGIKRDTLLAVAKDFFDTGVYSDVFMISASTGAGVEDLTAKLVSMMPEGPWLYPEDQTADLPARLLAAEITREKVYLRVHEELPYAATVETTAFEERKDGSVRIEQTILVEREGQRVIVIGKGGQTLKWIGQASREELCDILDRKVHLFLHVKVKENWAEERGLFSDIGLDFDV</sequence>
<evidence type="ECO:0000255" key="1">
    <source>
        <dbReference type="HAMAP-Rule" id="MF_00367"/>
    </source>
</evidence>
<evidence type="ECO:0000255" key="2">
    <source>
        <dbReference type="PROSITE-ProRule" id="PRU01050"/>
    </source>
</evidence>
<organism>
    <name type="scientific">Caulobacter vibrioides (strain NA1000 / CB15N)</name>
    <name type="common">Caulobacter crescentus</name>
    <dbReference type="NCBI Taxonomy" id="565050"/>
    <lineage>
        <taxon>Bacteria</taxon>
        <taxon>Pseudomonadati</taxon>
        <taxon>Pseudomonadota</taxon>
        <taxon>Alphaproteobacteria</taxon>
        <taxon>Caulobacterales</taxon>
        <taxon>Caulobacteraceae</taxon>
        <taxon>Caulobacter</taxon>
    </lineage>
</organism>
<name>ERA_CAUVN</name>
<gene>
    <name evidence="1" type="primary">era</name>
    <name type="ordered locus">CCNA_01633</name>
</gene>
<accession>B8H630</accession>
<feature type="chain" id="PRO_1000133769" description="GTPase Era">
    <location>
        <begin position="1"/>
        <end position="316"/>
    </location>
</feature>
<feature type="domain" description="Era-type G" evidence="2">
    <location>
        <begin position="9"/>
        <end position="190"/>
    </location>
</feature>
<feature type="domain" description="KH type-2" evidence="1">
    <location>
        <begin position="221"/>
        <end position="298"/>
    </location>
</feature>
<feature type="region of interest" description="G1" evidence="2">
    <location>
        <begin position="17"/>
        <end position="24"/>
    </location>
</feature>
<feature type="region of interest" description="G2" evidence="2">
    <location>
        <begin position="43"/>
        <end position="47"/>
    </location>
</feature>
<feature type="region of interest" description="G3" evidence="2">
    <location>
        <begin position="64"/>
        <end position="67"/>
    </location>
</feature>
<feature type="region of interest" description="G4" evidence="2">
    <location>
        <begin position="140"/>
        <end position="143"/>
    </location>
</feature>
<feature type="region of interest" description="G5" evidence="2">
    <location>
        <begin position="169"/>
        <end position="171"/>
    </location>
</feature>
<feature type="binding site" evidence="1">
    <location>
        <begin position="17"/>
        <end position="24"/>
    </location>
    <ligand>
        <name>GTP</name>
        <dbReference type="ChEBI" id="CHEBI:37565"/>
    </ligand>
</feature>
<feature type="binding site" evidence="1">
    <location>
        <begin position="64"/>
        <end position="68"/>
    </location>
    <ligand>
        <name>GTP</name>
        <dbReference type="ChEBI" id="CHEBI:37565"/>
    </ligand>
</feature>
<feature type="binding site" evidence="1">
    <location>
        <begin position="140"/>
        <end position="143"/>
    </location>
    <ligand>
        <name>GTP</name>
        <dbReference type="ChEBI" id="CHEBI:37565"/>
    </ligand>
</feature>
<dbReference type="EMBL" id="CP001340">
    <property type="protein sequence ID" value="ACL95098.1"/>
    <property type="molecule type" value="Genomic_DNA"/>
</dbReference>
<dbReference type="RefSeq" id="WP_012640271.1">
    <property type="nucleotide sequence ID" value="NC_011916.1"/>
</dbReference>
<dbReference type="RefSeq" id="YP_002517006.1">
    <property type="nucleotide sequence ID" value="NC_011916.1"/>
</dbReference>
<dbReference type="SMR" id="B8H630"/>
<dbReference type="GeneID" id="7331611"/>
<dbReference type="KEGG" id="ccs:CCNA_01633"/>
<dbReference type="PATRIC" id="fig|565050.3.peg.1609"/>
<dbReference type="HOGENOM" id="CLU_038009_1_1_5"/>
<dbReference type="OrthoDB" id="9805918at2"/>
<dbReference type="PhylomeDB" id="B8H630"/>
<dbReference type="Proteomes" id="UP000001364">
    <property type="component" value="Chromosome"/>
</dbReference>
<dbReference type="GO" id="GO:0005829">
    <property type="term" value="C:cytosol"/>
    <property type="evidence" value="ECO:0007669"/>
    <property type="project" value="TreeGrafter"/>
</dbReference>
<dbReference type="GO" id="GO:0005886">
    <property type="term" value="C:plasma membrane"/>
    <property type="evidence" value="ECO:0007669"/>
    <property type="project" value="UniProtKB-SubCell"/>
</dbReference>
<dbReference type="GO" id="GO:0005525">
    <property type="term" value="F:GTP binding"/>
    <property type="evidence" value="ECO:0007669"/>
    <property type="project" value="UniProtKB-UniRule"/>
</dbReference>
<dbReference type="GO" id="GO:0003924">
    <property type="term" value="F:GTPase activity"/>
    <property type="evidence" value="ECO:0007669"/>
    <property type="project" value="UniProtKB-UniRule"/>
</dbReference>
<dbReference type="GO" id="GO:0043024">
    <property type="term" value="F:ribosomal small subunit binding"/>
    <property type="evidence" value="ECO:0007669"/>
    <property type="project" value="TreeGrafter"/>
</dbReference>
<dbReference type="GO" id="GO:0070181">
    <property type="term" value="F:small ribosomal subunit rRNA binding"/>
    <property type="evidence" value="ECO:0007669"/>
    <property type="project" value="UniProtKB-UniRule"/>
</dbReference>
<dbReference type="GO" id="GO:0000028">
    <property type="term" value="P:ribosomal small subunit assembly"/>
    <property type="evidence" value="ECO:0007669"/>
    <property type="project" value="TreeGrafter"/>
</dbReference>
<dbReference type="CDD" id="cd04163">
    <property type="entry name" value="Era"/>
    <property type="match status" value="1"/>
</dbReference>
<dbReference type="CDD" id="cd22534">
    <property type="entry name" value="KH-II_Era"/>
    <property type="match status" value="1"/>
</dbReference>
<dbReference type="Gene3D" id="3.30.300.20">
    <property type="match status" value="1"/>
</dbReference>
<dbReference type="Gene3D" id="3.40.50.300">
    <property type="entry name" value="P-loop containing nucleotide triphosphate hydrolases"/>
    <property type="match status" value="1"/>
</dbReference>
<dbReference type="HAMAP" id="MF_00367">
    <property type="entry name" value="GTPase_Era"/>
    <property type="match status" value="1"/>
</dbReference>
<dbReference type="InterPro" id="IPR030388">
    <property type="entry name" value="G_ERA_dom"/>
</dbReference>
<dbReference type="InterPro" id="IPR006073">
    <property type="entry name" value="GTP-bd"/>
</dbReference>
<dbReference type="InterPro" id="IPR005662">
    <property type="entry name" value="GTPase_Era-like"/>
</dbReference>
<dbReference type="InterPro" id="IPR015946">
    <property type="entry name" value="KH_dom-like_a/b"/>
</dbReference>
<dbReference type="InterPro" id="IPR004044">
    <property type="entry name" value="KH_dom_type_2"/>
</dbReference>
<dbReference type="InterPro" id="IPR009019">
    <property type="entry name" value="KH_sf_prok-type"/>
</dbReference>
<dbReference type="InterPro" id="IPR027417">
    <property type="entry name" value="P-loop_NTPase"/>
</dbReference>
<dbReference type="InterPro" id="IPR005225">
    <property type="entry name" value="Small_GTP-bd"/>
</dbReference>
<dbReference type="NCBIfam" id="TIGR00436">
    <property type="entry name" value="era"/>
    <property type="match status" value="1"/>
</dbReference>
<dbReference type="NCBIfam" id="NF000908">
    <property type="entry name" value="PRK00089.1"/>
    <property type="match status" value="1"/>
</dbReference>
<dbReference type="NCBIfam" id="TIGR00231">
    <property type="entry name" value="small_GTP"/>
    <property type="match status" value="1"/>
</dbReference>
<dbReference type="PANTHER" id="PTHR42698">
    <property type="entry name" value="GTPASE ERA"/>
    <property type="match status" value="1"/>
</dbReference>
<dbReference type="PANTHER" id="PTHR42698:SF1">
    <property type="entry name" value="GTPASE ERA, MITOCHONDRIAL"/>
    <property type="match status" value="1"/>
</dbReference>
<dbReference type="Pfam" id="PF07650">
    <property type="entry name" value="KH_2"/>
    <property type="match status" value="1"/>
</dbReference>
<dbReference type="Pfam" id="PF01926">
    <property type="entry name" value="MMR_HSR1"/>
    <property type="match status" value="1"/>
</dbReference>
<dbReference type="SUPFAM" id="SSF52540">
    <property type="entry name" value="P-loop containing nucleoside triphosphate hydrolases"/>
    <property type="match status" value="1"/>
</dbReference>
<dbReference type="SUPFAM" id="SSF54814">
    <property type="entry name" value="Prokaryotic type KH domain (KH-domain type II)"/>
    <property type="match status" value="1"/>
</dbReference>
<dbReference type="PROSITE" id="PS51713">
    <property type="entry name" value="G_ERA"/>
    <property type="match status" value="1"/>
</dbReference>
<dbReference type="PROSITE" id="PS50823">
    <property type="entry name" value="KH_TYPE_2"/>
    <property type="match status" value="1"/>
</dbReference>